<reference key="1">
    <citation type="journal article" date="2002" name="Int. J. Oncol.">
        <title>The rgl-1 is a legitimate homologue of lethal giant larvae recessive oncogene in rat.</title>
        <authorList>
            <person name="Kim Y.-S."/>
            <person name="Baek K.-H."/>
            <person name="Lee K.Y."/>
            <person name="Chung H.-M."/>
            <person name="Lee K.-A."/>
            <person name="Ko J.J."/>
            <person name="Cha K.Y."/>
        </authorList>
    </citation>
    <scope>NUCLEOTIDE SEQUENCE [MRNA]</scope>
    <scope>TISSUE SPECIFICITY</scope>
    <source>
        <strain>Sprague-Dawley</strain>
        <tissue>Brain</tissue>
    </source>
</reference>
<reference key="2">
    <citation type="journal article" date="2011" name="Dev. Cell">
        <title>Lgl1 activation of rab10 promotes axonal membrane trafficking underlying neuronal polarization.</title>
        <authorList>
            <person name="Wang T."/>
            <person name="Liu Y."/>
            <person name="Xu X.H."/>
            <person name="Deng C.Y."/>
            <person name="Wu K.Y."/>
            <person name="Zhu J."/>
            <person name="Fu X.Q."/>
            <person name="He M."/>
            <person name="Luo Z.G."/>
        </authorList>
    </citation>
    <scope>FUNCTION IN AXON DEVELOPMENT</scope>
    <scope>INTERACTION WITH RAB10</scope>
    <scope>SUBCELLULAR LOCATION</scope>
    <scope>TISSUE SPECIFICITY</scope>
</reference>
<accession>Q8K4K5</accession>
<keyword id="KW-0966">Cell projection</keyword>
<keyword id="KW-0963">Cytoplasm</keyword>
<keyword id="KW-0206">Cytoskeleton</keyword>
<keyword id="KW-0967">Endosome</keyword>
<keyword id="KW-0268">Exocytosis</keyword>
<keyword id="KW-0333">Golgi apparatus</keyword>
<keyword id="KW-0472">Membrane</keyword>
<keyword id="KW-0597">Phosphoprotein</keyword>
<keyword id="KW-1185">Reference proteome</keyword>
<keyword id="KW-0677">Repeat</keyword>
<keyword id="KW-0853">WD repeat</keyword>
<name>L2GL1_RAT</name>
<organism>
    <name type="scientific">Rattus norvegicus</name>
    <name type="common">Rat</name>
    <dbReference type="NCBI Taxonomy" id="10116"/>
    <lineage>
        <taxon>Eukaryota</taxon>
        <taxon>Metazoa</taxon>
        <taxon>Chordata</taxon>
        <taxon>Craniata</taxon>
        <taxon>Vertebrata</taxon>
        <taxon>Euteleostomi</taxon>
        <taxon>Mammalia</taxon>
        <taxon>Eutheria</taxon>
        <taxon>Euarchontoglires</taxon>
        <taxon>Glires</taxon>
        <taxon>Rodentia</taxon>
        <taxon>Myomorpha</taxon>
        <taxon>Muroidea</taxon>
        <taxon>Muridae</taxon>
        <taxon>Murinae</taxon>
        <taxon>Rattus</taxon>
    </lineage>
</organism>
<feature type="chain" id="PRO_0000232727" description="Lethal(2) giant larvae protein homolog 1">
    <location>
        <begin position="1"/>
        <end position="1036"/>
    </location>
</feature>
<feature type="repeat" description="WD 1">
    <location>
        <begin position="38"/>
        <end position="71"/>
    </location>
</feature>
<feature type="repeat" description="WD 2">
    <location>
        <begin position="78"/>
        <end position="119"/>
    </location>
</feature>
<feature type="repeat" description="WD 3">
    <location>
        <begin position="139"/>
        <end position="175"/>
    </location>
</feature>
<feature type="repeat" description="WD 4">
    <location>
        <begin position="199"/>
        <end position="233"/>
    </location>
</feature>
<feature type="repeat" description="WD 5">
    <location>
        <begin position="239"/>
        <end position="271"/>
    </location>
</feature>
<feature type="repeat" description="WD 6">
    <location>
        <begin position="289"/>
        <end position="331"/>
    </location>
</feature>
<feature type="repeat" description="WD 7">
    <location>
        <begin position="339"/>
        <end position="373"/>
    </location>
</feature>
<feature type="repeat" description="WD 8">
    <location>
        <begin position="395"/>
        <end position="473"/>
    </location>
</feature>
<feature type="repeat" description="WD 9">
    <location>
        <begin position="517"/>
        <end position="592"/>
    </location>
</feature>
<feature type="repeat" description="WD 10">
    <location>
        <begin position="601"/>
        <end position="662"/>
    </location>
</feature>
<feature type="repeat" description="WD 11">
    <location>
        <begin position="722"/>
        <end position="782"/>
    </location>
</feature>
<feature type="repeat" description="WD 12">
    <location>
        <begin position="791"/>
        <end position="843"/>
    </location>
</feature>
<feature type="repeat" description="WD 13">
    <location>
        <begin position="848"/>
        <end position="901"/>
    </location>
</feature>
<feature type="repeat" description="WD 14">
    <location>
        <begin position="915"/>
        <end position="938"/>
    </location>
</feature>
<feature type="region of interest" description="Disordered" evidence="4">
    <location>
        <begin position="670"/>
        <end position="694"/>
    </location>
</feature>
<feature type="region of interest" description="Disordered" evidence="4">
    <location>
        <begin position="980"/>
        <end position="1002"/>
    </location>
</feature>
<feature type="compositionally biased region" description="Polar residues" evidence="4">
    <location>
        <begin position="678"/>
        <end position="693"/>
    </location>
</feature>
<feature type="modified residue" description="Phosphoserine" evidence="2">
    <location>
        <position position="662"/>
    </location>
</feature>
<feature type="modified residue" description="Phosphothreonine" evidence="3">
    <location>
        <position position="957"/>
    </location>
</feature>
<feature type="modified residue" description="Phosphoserine" evidence="3">
    <location>
        <position position="964"/>
    </location>
</feature>
<feature type="modified residue" description="Phosphoserine" evidence="3">
    <location>
        <position position="982"/>
    </location>
</feature>
<feature type="modified residue" description="Phosphoserine" evidence="3">
    <location>
        <position position="989"/>
    </location>
</feature>
<dbReference type="EMBL" id="AF356187">
    <property type="protein sequence ID" value="AAM95877.1"/>
    <property type="molecule type" value="mRNA"/>
</dbReference>
<dbReference type="SMR" id="Q8K4K5"/>
<dbReference type="BioGRID" id="248488">
    <property type="interactions" value="1"/>
</dbReference>
<dbReference type="FunCoup" id="Q8K4K5">
    <property type="interactions" value="1970"/>
</dbReference>
<dbReference type="STRING" id="10116.ENSRNOP00000005366"/>
<dbReference type="iPTMnet" id="Q8K4K5"/>
<dbReference type="PhosphoSitePlus" id="Q8K4K5"/>
<dbReference type="PaxDb" id="10116-ENSRNOP00000005366"/>
<dbReference type="UCSC" id="RGD:3012">
    <property type="organism name" value="rat"/>
</dbReference>
<dbReference type="AGR" id="RGD:3012"/>
<dbReference type="RGD" id="3012">
    <property type="gene designation" value="Llgl1"/>
</dbReference>
<dbReference type="eggNOG" id="KOG1983">
    <property type="taxonomic scope" value="Eukaryota"/>
</dbReference>
<dbReference type="InParanoid" id="Q8K4K5"/>
<dbReference type="PhylomeDB" id="Q8K4K5"/>
<dbReference type="PRO" id="PR:Q8K4K5"/>
<dbReference type="Proteomes" id="UP000002494">
    <property type="component" value="Unplaced"/>
</dbReference>
<dbReference type="GO" id="GO:0030424">
    <property type="term" value="C:axon"/>
    <property type="evidence" value="ECO:0007669"/>
    <property type="project" value="UniProtKB-SubCell"/>
</dbReference>
<dbReference type="GO" id="GO:0016323">
    <property type="term" value="C:basolateral plasma membrane"/>
    <property type="evidence" value="ECO:0000266"/>
    <property type="project" value="RGD"/>
</dbReference>
<dbReference type="GO" id="GO:0030864">
    <property type="term" value="C:cortical actin cytoskeleton"/>
    <property type="evidence" value="ECO:0000266"/>
    <property type="project" value="RGD"/>
</dbReference>
<dbReference type="GO" id="GO:0005737">
    <property type="term" value="C:cytoplasm"/>
    <property type="evidence" value="ECO:0000266"/>
    <property type="project" value="RGD"/>
</dbReference>
<dbReference type="GO" id="GO:0005856">
    <property type="term" value="C:cytoskeleton"/>
    <property type="evidence" value="ECO:0000266"/>
    <property type="project" value="RGD"/>
</dbReference>
<dbReference type="GO" id="GO:0031901">
    <property type="term" value="C:early endosome membrane"/>
    <property type="evidence" value="ECO:0000314"/>
    <property type="project" value="UniProtKB"/>
</dbReference>
<dbReference type="GO" id="GO:0000137">
    <property type="term" value="C:Golgi cis cisterna"/>
    <property type="evidence" value="ECO:0000314"/>
    <property type="project" value="UniProtKB"/>
</dbReference>
<dbReference type="GO" id="GO:0000139">
    <property type="term" value="C:Golgi membrane"/>
    <property type="evidence" value="ECO:0007669"/>
    <property type="project" value="UniProtKB-SubCell"/>
</dbReference>
<dbReference type="GO" id="GO:0035748">
    <property type="term" value="C:myelin sheath abaxonal region"/>
    <property type="evidence" value="ECO:0000266"/>
    <property type="project" value="RGD"/>
</dbReference>
<dbReference type="GO" id="GO:0005886">
    <property type="term" value="C:plasma membrane"/>
    <property type="evidence" value="ECO:0000318"/>
    <property type="project" value="GO_Central"/>
</dbReference>
<dbReference type="GO" id="GO:0032588">
    <property type="term" value="C:trans-Golgi network membrane"/>
    <property type="evidence" value="ECO:0000314"/>
    <property type="project" value="UniProtKB"/>
</dbReference>
<dbReference type="GO" id="GO:0005096">
    <property type="term" value="F:GTPase activator activity"/>
    <property type="evidence" value="ECO:0000314"/>
    <property type="project" value="UniProtKB"/>
</dbReference>
<dbReference type="GO" id="GO:0045159">
    <property type="term" value="F:myosin II binding"/>
    <property type="evidence" value="ECO:0000318"/>
    <property type="project" value="GO_Central"/>
</dbReference>
<dbReference type="GO" id="GO:0019901">
    <property type="term" value="F:protein kinase binding"/>
    <property type="evidence" value="ECO:0000266"/>
    <property type="project" value="RGD"/>
</dbReference>
<dbReference type="GO" id="GO:0031267">
    <property type="term" value="F:small GTPase binding"/>
    <property type="evidence" value="ECO:0000353"/>
    <property type="project" value="UniProtKB"/>
</dbReference>
<dbReference type="GO" id="GO:0007409">
    <property type="term" value="P:axonogenesis"/>
    <property type="evidence" value="ECO:0000315"/>
    <property type="project" value="UniProtKB"/>
</dbReference>
<dbReference type="GO" id="GO:0030866">
    <property type="term" value="P:cortical actin cytoskeleton organization"/>
    <property type="evidence" value="ECO:0000266"/>
    <property type="project" value="RGD"/>
</dbReference>
<dbReference type="GO" id="GO:0051294">
    <property type="term" value="P:establishment of spindle orientation"/>
    <property type="evidence" value="ECO:0000318"/>
    <property type="project" value="GO_Central"/>
</dbReference>
<dbReference type="GO" id="GO:0006887">
    <property type="term" value="P:exocytosis"/>
    <property type="evidence" value="ECO:0007669"/>
    <property type="project" value="UniProtKB-KW"/>
</dbReference>
<dbReference type="GO" id="GO:0006893">
    <property type="term" value="P:Golgi to plasma membrane transport"/>
    <property type="evidence" value="ECO:0000315"/>
    <property type="project" value="UniProtKB"/>
</dbReference>
<dbReference type="GO" id="GO:0035090">
    <property type="term" value="P:maintenance of apical/basal cell polarity"/>
    <property type="evidence" value="ECO:0000266"/>
    <property type="project" value="RGD"/>
</dbReference>
<dbReference type="GO" id="GO:0065003">
    <property type="term" value="P:protein-containing complex assembly"/>
    <property type="evidence" value="ECO:0000266"/>
    <property type="project" value="RGD"/>
</dbReference>
<dbReference type="GO" id="GO:0032878">
    <property type="term" value="P:regulation of establishment or maintenance of cell polarity"/>
    <property type="evidence" value="ECO:0000318"/>
    <property type="project" value="GO_Central"/>
</dbReference>
<dbReference type="GO" id="GO:0008593">
    <property type="term" value="P:regulation of Notch signaling pathway"/>
    <property type="evidence" value="ECO:0000318"/>
    <property type="project" value="GO_Central"/>
</dbReference>
<dbReference type="FunFam" id="2.130.10.10:FF:001325">
    <property type="entry name" value="Lethal(2) giant larvae protein homolog 1"/>
    <property type="match status" value="1"/>
</dbReference>
<dbReference type="Gene3D" id="2.130.10.10">
    <property type="entry name" value="YVTN repeat-like/Quinoprotein amine dehydrogenase"/>
    <property type="match status" value="2"/>
</dbReference>
<dbReference type="InterPro" id="IPR000664">
    <property type="entry name" value="Lethal2_giant"/>
</dbReference>
<dbReference type="InterPro" id="IPR013905">
    <property type="entry name" value="Lgl_C_dom"/>
</dbReference>
<dbReference type="InterPro" id="IPR013577">
    <property type="entry name" value="LLGL2"/>
</dbReference>
<dbReference type="InterPro" id="IPR015943">
    <property type="entry name" value="WD40/YVTN_repeat-like_dom_sf"/>
</dbReference>
<dbReference type="InterPro" id="IPR036322">
    <property type="entry name" value="WD40_repeat_dom_sf"/>
</dbReference>
<dbReference type="InterPro" id="IPR001680">
    <property type="entry name" value="WD40_rpt"/>
</dbReference>
<dbReference type="PANTHER" id="PTHR10241">
    <property type="entry name" value="LETHAL 2 GIANT LARVAE PROTEIN"/>
    <property type="match status" value="1"/>
</dbReference>
<dbReference type="PANTHER" id="PTHR10241:SF21">
    <property type="entry name" value="LETHAL(2) GIANT LARVAE PROTEIN HOMOLOG 1"/>
    <property type="match status" value="1"/>
</dbReference>
<dbReference type="Pfam" id="PF08596">
    <property type="entry name" value="Lgl_C"/>
    <property type="match status" value="1"/>
</dbReference>
<dbReference type="Pfam" id="PF08366">
    <property type="entry name" value="LLGL"/>
    <property type="match status" value="1"/>
</dbReference>
<dbReference type="PRINTS" id="PR00962">
    <property type="entry name" value="LETHAL2GIANT"/>
</dbReference>
<dbReference type="SMART" id="SM00320">
    <property type="entry name" value="WD40"/>
    <property type="match status" value="5"/>
</dbReference>
<dbReference type="SUPFAM" id="SSF50978">
    <property type="entry name" value="WD40 repeat-like"/>
    <property type="match status" value="2"/>
</dbReference>
<dbReference type="PROSITE" id="PS00678">
    <property type="entry name" value="WD_REPEATS_1"/>
    <property type="match status" value="2"/>
</dbReference>
<dbReference type="PROSITE" id="PS50082">
    <property type="entry name" value="WD_REPEATS_2"/>
    <property type="match status" value="1"/>
</dbReference>
<sequence length="1036" mass="112495">MMKFRFRRQGADPQREKLKQELFTFHKTVEHGFPNQPSALAFDPELRIMAIGTRSGAVKIYGAPGVEFTGLHRDAATVTQMHFLPGQGRLLTLLDDSSLHLWEIIQRNGCAHLEEGLSFHPPSRPSFGNASFPAGLTRVTVVLLAAGDTVVLGTESGSIFFLDVATLALLEGQTLSPDEVLRSVPDDYRCGKALGPVESLQGHLQDPSKILIGYSRGLLVIWSQATQSVEHVFLGNQQLESLCWGRGGSNIISSHSDGSYAIWSTDTGSPPTLQPTVVTTPYGPFPCKAINKILWRSCESGDHFIIFSGGMPRASYGDRHCVSVLRAETLVTLDFTSRVIDFFTVHSTQPEDGFDNPQALAVLLEEELVVLDLQTPGWPAVPAPYLAPLHSSAITCSAHVANVPSKLWARIVSAGERQSPQPASSALSWPITGGRNLAQEPSQRGLLLTGHEDGTVRFWDASGVALRPLYKLSTAGLFQTDCEHADSLAQAVEDDWPPFRKVGCFDPYSDDPRLGIQKVALCKYTAQMVVAGTAGQVLVLELSDVPGEHTVSVASVDLLQDREGFTWKGHERLSPHTGPLPWPAGFQPRVLIQCLPPAAVTAVALHAEWSLVAFGTSHGFGLFDYQRKSPVLARCTLHPNDSLAMEGPLSRVKSLKKSLRQSFRRIRKSRVSGKKRATTASSKLQEANAQLAEQTCPHDVEMTPVQRRIEPRSADDSLSGVVRCLYFADTFLRDATHHGPTMWAGTNSGSVFAYALEVPAATAGGEKRPEQAVEAVLGKEVQLMHRAPVVAIAVLDGRGRPLPEPYEASRDLAQAPDMQGGHAVLIASEEQFKVFTLPKVSAKTKFKLTAHEGCRVRKVALATFASVMSEDYAETCLACLTNLGDVHVFSVPGLRPQVHYSCIRKEDISGIASCVFTRHGQGFYLISPSEFERFSLSARNITEPLCSLDISWPQNATQPRLQESPKLSQANGTRDIILAPESCEGSPSSAHSKRADTMEPPEAALSPVSIDSAASGDTMLDTTGDVTVEYVKDFLG</sequence>
<protein>
    <recommendedName>
        <fullName>Lethal(2) giant larvae protein homolog 1</fullName>
        <shortName>LLGL</shortName>
    </recommendedName>
    <alternativeName>
        <fullName>Rgl-1</fullName>
    </alternativeName>
</protein>
<evidence type="ECO:0000250" key="1"/>
<evidence type="ECO:0000250" key="2">
    <source>
        <dbReference type="UniProtKB" id="Q15334"/>
    </source>
</evidence>
<evidence type="ECO:0000250" key="3">
    <source>
        <dbReference type="UniProtKB" id="Q80Y17"/>
    </source>
</evidence>
<evidence type="ECO:0000256" key="4">
    <source>
        <dbReference type="SAM" id="MobiDB-lite"/>
    </source>
</evidence>
<evidence type="ECO:0000269" key="5">
    <source>
    </source>
</evidence>
<evidence type="ECO:0000269" key="6">
    <source>
    </source>
</evidence>
<evidence type="ECO:0000305" key="7"/>
<gene>
    <name type="primary">Llgl1</name>
    <name type="synonym">Rgl1</name>
</gene>
<comment type="function">
    <text evidence="6">Cortical cytoskeleton protein found in a complex involved in maintaining cell polarity and epithelial integrity. Involved in the regulation of mitotic spindle orientation, proliferation, differentiation and tissue organization of neuroepithelial cells. Involved in axonogenesis through RAB10 activation thereby regulating vesicular membrane trafficking toward the axonal plasma membrane.</text>
</comment>
<comment type="subunit">
    <text evidence="1 6">Associated with nonmuscle myosin II heavy chain. Interacts with PRKCI/aPKC, PARD6B/Par-6 and PARD6A. Interacts with STX4A. Interacts with DCAF1 (By similarity). Interacts with RAB10 (GDP-bound form); the interaction is direct and promotes RAB10 association with membranes and activation through competition with the Rab inhibitor GDI1.</text>
</comment>
<comment type="subcellular location">
    <subcellularLocation>
        <location evidence="6">Early endosome membrane</location>
    </subcellularLocation>
    <subcellularLocation>
        <location evidence="6">Golgi apparatus</location>
        <location evidence="6">trans-Golgi network membrane</location>
    </subcellularLocation>
    <subcellularLocation>
        <location evidence="6">Golgi apparatus membrane</location>
    </subcellularLocation>
    <subcellularLocation>
        <location evidence="6">Cell projection</location>
        <location evidence="6">Axon</location>
    </subcellularLocation>
    <subcellularLocation>
        <location evidence="1">Cytoplasm</location>
        <location evidence="1">Cytoskeleton</location>
    </subcellularLocation>
    <text evidence="1">Localized to the lateral membrane during the polarization and formation cell-cell contacts (By similarity). Enriched in developing axons.</text>
</comment>
<comment type="tissue specificity">
    <text evidence="5 6">Expressed at high level in the testis and at lower level in ovary, brain, spleen and kidney.</text>
</comment>
<comment type="PTM">
    <text>Phosphorylated by PRKCI.</text>
</comment>
<comment type="miscellaneous">
    <text>Complements a salt-sensitive yeast mutant (SOP-deleted mutant) and thus can regulate cation homeostasis.</text>
</comment>
<comment type="similarity">
    <text evidence="7">Belongs to the WD repeat L(2)GL family.</text>
</comment>
<proteinExistence type="evidence at protein level"/>